<dbReference type="EC" id="3.1.3.75" evidence="2"/>
<dbReference type="EMBL" id="AJ006529">
    <property type="protein sequence ID" value="CAA07090.1"/>
    <property type="molecule type" value="mRNA"/>
</dbReference>
<dbReference type="RefSeq" id="NP_990176.1">
    <property type="nucleotide sequence ID" value="NM_204845.2"/>
</dbReference>
<dbReference type="FunCoup" id="O73884">
    <property type="interactions" value="363"/>
</dbReference>
<dbReference type="STRING" id="9031.ENSGALP00000051458"/>
<dbReference type="PaxDb" id="9031-ENSGALP00000001955"/>
<dbReference type="GeneID" id="395650"/>
<dbReference type="KEGG" id="gga:395650"/>
<dbReference type="CTD" id="162466"/>
<dbReference type="VEuPathDB" id="HostDB:geneid_395650"/>
<dbReference type="eggNOG" id="KOG3120">
    <property type="taxonomic scope" value="Eukaryota"/>
</dbReference>
<dbReference type="InParanoid" id="O73884"/>
<dbReference type="OrthoDB" id="10267182at2759"/>
<dbReference type="PhylomeDB" id="O73884"/>
<dbReference type="BRENDA" id="3.1.3.75">
    <property type="organism ID" value="1306"/>
</dbReference>
<dbReference type="PRO" id="PR:O73884"/>
<dbReference type="Proteomes" id="UP000000539">
    <property type="component" value="Unassembled WGS sequence"/>
</dbReference>
<dbReference type="GO" id="GO:0031012">
    <property type="term" value="C:extracellular matrix"/>
    <property type="evidence" value="ECO:0000314"/>
    <property type="project" value="MGI"/>
</dbReference>
<dbReference type="GO" id="GO:0065010">
    <property type="term" value="C:extracellular membrane-bounded organelle"/>
    <property type="evidence" value="ECO:0000314"/>
    <property type="project" value="MGI"/>
</dbReference>
<dbReference type="GO" id="GO:0046872">
    <property type="term" value="F:metal ion binding"/>
    <property type="evidence" value="ECO:0007669"/>
    <property type="project" value="UniProtKB-KW"/>
</dbReference>
<dbReference type="GO" id="GO:0016791">
    <property type="term" value="F:phosphatase activity"/>
    <property type="evidence" value="ECO:0000318"/>
    <property type="project" value="GO_Central"/>
</dbReference>
<dbReference type="GO" id="GO:0052731">
    <property type="term" value="F:phosphocholine phosphatase activity"/>
    <property type="evidence" value="ECO:0000250"/>
    <property type="project" value="UniProtKB"/>
</dbReference>
<dbReference type="GO" id="GO:0052732">
    <property type="term" value="F:phosphoethanolamine phosphatase activity"/>
    <property type="evidence" value="ECO:0000250"/>
    <property type="project" value="UniProtKB"/>
</dbReference>
<dbReference type="GO" id="GO:0030282">
    <property type="term" value="P:bone mineralization"/>
    <property type="evidence" value="ECO:0000250"/>
    <property type="project" value="UniProtKB"/>
</dbReference>
<dbReference type="GO" id="GO:0035630">
    <property type="term" value="P:bone mineralization involved in bone maturation"/>
    <property type="evidence" value="ECO:0000318"/>
    <property type="project" value="GO_Central"/>
</dbReference>
<dbReference type="GO" id="GO:0030500">
    <property type="term" value="P:regulation of bone mineralization"/>
    <property type="evidence" value="ECO:0007669"/>
    <property type="project" value="UniProtKB-KW"/>
</dbReference>
<dbReference type="CDD" id="cd16418">
    <property type="entry name" value="HAD_Pase"/>
    <property type="match status" value="1"/>
</dbReference>
<dbReference type="FunFam" id="3.40.50.1000:FF:000097">
    <property type="entry name" value="phosphoethanolamine/phosphocholine phosphatase isoform X2"/>
    <property type="match status" value="1"/>
</dbReference>
<dbReference type="Gene3D" id="3.40.50.1000">
    <property type="entry name" value="HAD superfamily/HAD-like"/>
    <property type="match status" value="1"/>
</dbReference>
<dbReference type="InterPro" id="IPR036412">
    <property type="entry name" value="HAD-like_sf"/>
</dbReference>
<dbReference type="InterPro" id="IPR006384">
    <property type="entry name" value="HAD_hydro_PyrdxlP_Pase-like"/>
</dbReference>
<dbReference type="InterPro" id="IPR023214">
    <property type="entry name" value="HAD_sf"/>
</dbReference>
<dbReference type="InterPro" id="IPR016965">
    <property type="entry name" value="Pase_PHOSPHO-typ"/>
</dbReference>
<dbReference type="NCBIfam" id="TIGR01489">
    <property type="entry name" value="DKMTPPase-SF"/>
    <property type="match status" value="1"/>
</dbReference>
<dbReference type="NCBIfam" id="TIGR01488">
    <property type="entry name" value="HAD-SF-IB"/>
    <property type="match status" value="1"/>
</dbReference>
<dbReference type="PANTHER" id="PTHR20889">
    <property type="entry name" value="PHOSPHATASE, ORPHAN 1, 2"/>
    <property type="match status" value="1"/>
</dbReference>
<dbReference type="PANTHER" id="PTHR20889:SF2">
    <property type="entry name" value="PHOSPHOETHANOLAMINE_PHOSPHOCHOLINE PHOSPHATASE"/>
    <property type="match status" value="1"/>
</dbReference>
<dbReference type="Pfam" id="PF06888">
    <property type="entry name" value="Put_Phosphatase"/>
    <property type="match status" value="1"/>
</dbReference>
<dbReference type="PIRSF" id="PIRSF031051">
    <property type="entry name" value="PyrdxlP_Pase_PHOSPHO2"/>
    <property type="match status" value="1"/>
</dbReference>
<dbReference type="SUPFAM" id="SSF56784">
    <property type="entry name" value="HAD-like"/>
    <property type="match status" value="1"/>
</dbReference>
<organism>
    <name type="scientific">Gallus gallus</name>
    <name type="common">Chicken</name>
    <dbReference type="NCBI Taxonomy" id="9031"/>
    <lineage>
        <taxon>Eukaryota</taxon>
        <taxon>Metazoa</taxon>
        <taxon>Chordata</taxon>
        <taxon>Craniata</taxon>
        <taxon>Vertebrata</taxon>
        <taxon>Euteleostomi</taxon>
        <taxon>Archelosauria</taxon>
        <taxon>Archosauria</taxon>
        <taxon>Dinosauria</taxon>
        <taxon>Saurischia</taxon>
        <taxon>Theropoda</taxon>
        <taxon>Coelurosauria</taxon>
        <taxon>Aves</taxon>
        <taxon>Neognathae</taxon>
        <taxon>Galloanserae</taxon>
        <taxon>Galliformes</taxon>
        <taxon>Phasianidae</taxon>
        <taxon>Phasianinae</taxon>
        <taxon>Gallus</taxon>
    </lineage>
</organism>
<proteinExistence type="evidence at transcript level"/>
<accession>O73884</accession>
<feature type="chain" id="PRO_0000068831" description="Phosphoethanolamine/phosphocholine phosphatase">
    <location>
        <begin position="1"/>
        <end position="268"/>
    </location>
</feature>
<feature type="active site" description="Nucleophile" evidence="2">
    <location>
        <position position="32"/>
    </location>
</feature>
<feature type="active site" description="Proton donor" evidence="3">
    <location>
        <position position="34"/>
    </location>
</feature>
<feature type="binding site" evidence="3">
    <location>
        <position position="32"/>
    </location>
    <ligand>
        <name>Mg(2+)</name>
        <dbReference type="ChEBI" id="CHEBI:18420"/>
    </ligand>
</feature>
<feature type="binding site" evidence="3">
    <location>
        <position position="34"/>
    </location>
    <ligand>
        <name>Mg(2+)</name>
        <dbReference type="ChEBI" id="CHEBI:18420"/>
    </ligand>
</feature>
<feature type="binding site" evidence="2">
    <location>
        <position position="43"/>
    </location>
    <ligand>
        <name>substrate</name>
    </ligand>
</feature>
<feature type="binding site" evidence="2">
    <location>
        <position position="123"/>
    </location>
    <ligand>
        <name>substrate</name>
    </ligand>
</feature>
<feature type="binding site" evidence="3">
    <location>
        <position position="203"/>
    </location>
    <ligand>
        <name>Mg(2+)</name>
        <dbReference type="ChEBI" id="CHEBI:18420"/>
    </ligand>
</feature>
<sequence length="268" mass="30443">MKRCCEGVGLPCLFKGVGMASSRPPKYLLVFDFDGTIINESSDDSIVRAAPGQALPEHIRQSFREGFYNEYMQRVLAYMGDQGVKMGDFKAVYENIPLSPGMPDLFQFLSKNHELFEIILISDANMFGIECKLRAAGFYSLFRKIFSNPSSFDKRGYFTLGPYHSHKCLDCPANTCKRKILTEYLAERAQEEVEFERVFYVGDGANDFCPSVTLTSADVAFPRKGYPMHQMTQEMEKKQPGTFQATVVPWESATEVARYLQELLKKKC</sequence>
<keyword id="KW-0378">Hydrolase</keyword>
<keyword id="KW-0460">Magnesium</keyword>
<keyword id="KW-0479">Metal-binding</keyword>
<keyword id="KW-0495">Mineral balance</keyword>
<keyword id="KW-1185">Reference proteome</keyword>
<evidence type="ECO:0000250" key="1">
    <source>
        <dbReference type="UniProtKB" id="Q8R2H9"/>
    </source>
</evidence>
<evidence type="ECO:0000250" key="2">
    <source>
        <dbReference type="UniProtKB" id="Q8TCT1"/>
    </source>
</evidence>
<evidence type="ECO:0000250" key="3">
    <source>
        <dbReference type="UniProtKB" id="Q96GD0"/>
    </source>
</evidence>
<evidence type="ECO:0000269" key="4">
    <source>
    </source>
</evidence>
<evidence type="ECO:0000269" key="5">
    <source>
    </source>
</evidence>
<evidence type="ECO:0000305" key="6"/>
<comment type="function">
    <text evidence="2 4">Phosphatase that has a high activity toward phosphoethanolamine (PEA) and phosphocholine (PCho) (By similarity). Involved in the generation of inorganic phosphate for bone mineralization (PubMed:15050893).</text>
</comment>
<comment type="catalytic activity">
    <reaction evidence="2">
        <text>phosphoethanolamine + H2O = ethanolamine + phosphate</text>
        <dbReference type="Rhea" id="RHEA:16089"/>
        <dbReference type="ChEBI" id="CHEBI:15377"/>
        <dbReference type="ChEBI" id="CHEBI:43474"/>
        <dbReference type="ChEBI" id="CHEBI:57603"/>
        <dbReference type="ChEBI" id="CHEBI:58190"/>
        <dbReference type="EC" id="3.1.3.75"/>
    </reaction>
</comment>
<comment type="catalytic activity">
    <reaction evidence="2">
        <text>phosphocholine + H2O = choline + phosphate</text>
        <dbReference type="Rhea" id="RHEA:10492"/>
        <dbReference type="ChEBI" id="CHEBI:15354"/>
        <dbReference type="ChEBI" id="CHEBI:15377"/>
        <dbReference type="ChEBI" id="CHEBI:43474"/>
        <dbReference type="ChEBI" id="CHEBI:295975"/>
        <dbReference type="EC" id="3.1.3.75"/>
    </reaction>
</comment>
<comment type="cofactor">
    <cofactor evidence="2">
        <name>Mg(2+)</name>
        <dbReference type="ChEBI" id="CHEBI:18420"/>
    </cofactor>
</comment>
<comment type="subcellular location">
    <subcellularLocation>
        <location evidence="1">Extracellular vesicle</location>
    </subcellularLocation>
    <text evidence="1">Localizes to special class of extracellular vesicles, named matrix vesicles (MVs), which are released by osteogenic cells.</text>
</comment>
<comment type="tissue specificity">
    <text evidence="4 5">Expressed at sites of mineralization in bone and cartilage. Highly expressed in hypertrophic chondrocytes compared to non-chondrogenic tissues. Expressed in chondrocytes but not in heart, liver, lung, kidney, spleen, muscle, adipose tissues not duodenum. In diaphyseal cortical bone, it is expressed in the osteoid layer of the periosteum, forming surfaces of growing osteons, and newly formed osteocytes, whereas it is not expressed in the endosteum and closed osteons. In growth plate cartilage, it is limited to the early hypertrophic chondrocytes and the ossification groove of Ranvier. Highly expressed on the mineralization surfaces of the cartilage remnants and trabecular bone within the primary spongiosa. Expressed in 17-day-old embryonic calvaria, the osteoid present on the intramembranous and periosteal bone surfaces but not in soft tissues examined.</text>
</comment>
<comment type="induction">
    <text evidence="5">Up-regulated 5-fold during chondrocyte terminal differentiation.</text>
</comment>
<comment type="similarity">
    <text evidence="6">Belongs to the HAD-like hydrolase superfamily. PHOSPHO family.</text>
</comment>
<gene>
    <name type="primary">PHOSPHO1</name>
</gene>
<protein>
    <recommendedName>
        <fullName>Phosphoethanolamine/phosphocholine phosphatase</fullName>
        <ecNumber evidence="2">3.1.3.75</ecNumber>
    </recommendedName>
    <alternativeName>
        <fullName>3X11A</fullName>
    </alternativeName>
</protein>
<name>PHOP1_CHICK</name>
<reference key="1">
    <citation type="journal article" date="1999" name="Biochim. Biophys. Acta">
        <title>Identification and cloning of a novel phosphatase expressed at high levels in differentiating growth plate chondrocytes.</title>
        <authorList>
            <person name="Houston B."/>
            <person name="Seawright E."/>
            <person name="Jefferies D."/>
            <person name="Hoogland E."/>
            <person name="Lester D."/>
            <person name="Whitehead C."/>
            <person name="Farquharson C."/>
        </authorList>
    </citation>
    <scope>NUCLEOTIDE SEQUENCE [MRNA]</scope>
    <scope>TISSUE SPECIFICITY</scope>
    <scope>INDUCTION</scope>
</reference>
<reference key="2">
    <citation type="journal article" date="2004" name="Bone">
        <title>PHOSPHO1 -- a novel phosphatase specifically expressed at sites of mineralisation in bone and cartilage.</title>
        <authorList>
            <person name="Houston B."/>
            <person name="Stewart A.J."/>
            <person name="Farquharson C."/>
        </authorList>
    </citation>
    <scope>FUNCTION</scope>
    <scope>TISSUE SPECIFICITY</scope>
</reference>